<keyword id="KW-0004">4Fe-4S</keyword>
<keyword id="KW-0067">ATP-binding</keyword>
<keyword id="KW-0963">Cytoplasm</keyword>
<keyword id="KW-0408">Iron</keyword>
<keyword id="KW-0411">Iron-sulfur</keyword>
<keyword id="KW-0479">Metal-binding</keyword>
<keyword id="KW-0547">Nucleotide-binding</keyword>
<keyword id="KW-1185">Reference proteome</keyword>
<dbReference type="EMBL" id="AAAB01008823">
    <property type="protein sequence ID" value="EAA05449.4"/>
    <property type="molecule type" value="Genomic_DNA"/>
</dbReference>
<dbReference type="RefSeq" id="XP_309831.4">
    <property type="nucleotide sequence ID" value="XM_309831.4"/>
</dbReference>
<dbReference type="SMR" id="Q7QGS3"/>
<dbReference type="FunCoup" id="Q7QGS3">
    <property type="interactions" value="284"/>
</dbReference>
<dbReference type="STRING" id="7165.Q7QGS3"/>
<dbReference type="PaxDb" id="7165-AGAP010873-PA"/>
<dbReference type="EnsemblMetazoa" id="AGAP010873-RA">
    <property type="protein sequence ID" value="AGAP010873-PA"/>
    <property type="gene ID" value="AGAP010873"/>
</dbReference>
<dbReference type="GeneID" id="1271085"/>
<dbReference type="KEGG" id="aga:1271085"/>
<dbReference type="CTD" id="10101"/>
<dbReference type="VEuPathDB" id="VectorBase:AGAMI1_009471"/>
<dbReference type="VEuPathDB" id="VectorBase:AGAP010873"/>
<dbReference type="eggNOG" id="KOG3022">
    <property type="taxonomic scope" value="Eukaryota"/>
</dbReference>
<dbReference type="HOGENOM" id="CLU_024839_0_1_1"/>
<dbReference type="InParanoid" id="Q7QGS3"/>
<dbReference type="OMA" id="WIPVFAD"/>
<dbReference type="PhylomeDB" id="Q7QGS3"/>
<dbReference type="Proteomes" id="UP000007062">
    <property type="component" value="Chromosome 3L"/>
</dbReference>
<dbReference type="GO" id="GO:0005829">
    <property type="term" value="C:cytosol"/>
    <property type="evidence" value="ECO:0000318"/>
    <property type="project" value="GO_Central"/>
</dbReference>
<dbReference type="GO" id="GO:0051539">
    <property type="term" value="F:4 iron, 4 sulfur cluster binding"/>
    <property type="evidence" value="ECO:0007669"/>
    <property type="project" value="UniProtKB-UniRule"/>
</dbReference>
<dbReference type="GO" id="GO:0005524">
    <property type="term" value="F:ATP binding"/>
    <property type="evidence" value="ECO:0007669"/>
    <property type="project" value="UniProtKB-KW"/>
</dbReference>
<dbReference type="GO" id="GO:0140663">
    <property type="term" value="F:ATP-dependent FeS chaperone activity"/>
    <property type="evidence" value="ECO:0007669"/>
    <property type="project" value="InterPro"/>
</dbReference>
<dbReference type="GO" id="GO:0051536">
    <property type="term" value="F:iron-sulfur cluster binding"/>
    <property type="evidence" value="ECO:0000318"/>
    <property type="project" value="GO_Central"/>
</dbReference>
<dbReference type="GO" id="GO:0046872">
    <property type="term" value="F:metal ion binding"/>
    <property type="evidence" value="ECO:0007669"/>
    <property type="project" value="UniProtKB-KW"/>
</dbReference>
<dbReference type="GO" id="GO:0016226">
    <property type="term" value="P:iron-sulfur cluster assembly"/>
    <property type="evidence" value="ECO:0000318"/>
    <property type="project" value="GO_Central"/>
</dbReference>
<dbReference type="CDD" id="cd02037">
    <property type="entry name" value="Mrp_NBP35"/>
    <property type="match status" value="1"/>
</dbReference>
<dbReference type="FunFam" id="3.40.50.300:FF:000796">
    <property type="entry name" value="Cytosolic Fe-S cluster assembly factor NUBP2"/>
    <property type="match status" value="1"/>
</dbReference>
<dbReference type="Gene3D" id="3.40.50.300">
    <property type="entry name" value="P-loop containing nucleotide triphosphate hydrolases"/>
    <property type="match status" value="1"/>
</dbReference>
<dbReference type="HAMAP" id="MF_02040">
    <property type="entry name" value="Mrp_NBP35"/>
    <property type="match status" value="1"/>
</dbReference>
<dbReference type="HAMAP" id="MF_03039">
    <property type="entry name" value="NUBP2"/>
    <property type="match status" value="1"/>
</dbReference>
<dbReference type="InterPro" id="IPR000808">
    <property type="entry name" value="Mrp-like_CS"/>
</dbReference>
<dbReference type="InterPro" id="IPR019591">
    <property type="entry name" value="Mrp/NBP35_ATP-bd"/>
</dbReference>
<dbReference type="InterPro" id="IPR028600">
    <property type="entry name" value="NUBP2/Cfd1_eukaryotes"/>
</dbReference>
<dbReference type="InterPro" id="IPR027417">
    <property type="entry name" value="P-loop_NTPase"/>
</dbReference>
<dbReference type="InterPro" id="IPR033756">
    <property type="entry name" value="YlxH/NBP35"/>
</dbReference>
<dbReference type="PANTHER" id="PTHR23264:SF19">
    <property type="entry name" value="CYTOSOLIC FE-S CLUSTER ASSEMBLY FACTOR NUBP2"/>
    <property type="match status" value="1"/>
</dbReference>
<dbReference type="PANTHER" id="PTHR23264">
    <property type="entry name" value="NUCLEOTIDE-BINDING PROTEIN NBP35 YEAST -RELATED"/>
    <property type="match status" value="1"/>
</dbReference>
<dbReference type="Pfam" id="PF10609">
    <property type="entry name" value="ParA"/>
    <property type="match status" value="1"/>
</dbReference>
<dbReference type="SUPFAM" id="SSF52540">
    <property type="entry name" value="P-loop containing nucleoside triphosphate hydrolases"/>
    <property type="match status" value="1"/>
</dbReference>
<dbReference type="PROSITE" id="PS01215">
    <property type="entry name" value="MRP"/>
    <property type="match status" value="1"/>
</dbReference>
<protein>
    <recommendedName>
        <fullName evidence="2">Cytosolic Fe-S cluster assembly factor Nubp2 homolog</fullName>
    </recommendedName>
</protein>
<feature type="chain" id="PRO_0000382706" description="Cytosolic Fe-S cluster assembly factor Nubp2 homolog">
    <location>
        <begin position="1"/>
        <end position="259"/>
    </location>
</feature>
<feature type="binding site" evidence="2">
    <location>
        <begin position="14"/>
        <end position="21"/>
    </location>
    <ligand>
        <name>ATP</name>
        <dbReference type="ChEBI" id="CHEBI:30616"/>
    </ligand>
</feature>
<feature type="binding site" evidence="2">
    <location>
        <position position="188"/>
    </location>
    <ligand>
        <name>[4Fe-4S] cluster</name>
        <dbReference type="ChEBI" id="CHEBI:49883"/>
        <note>ligand shared between dimeric partners</note>
    </ligand>
</feature>
<feature type="binding site" evidence="2">
    <location>
        <position position="191"/>
    </location>
    <ligand>
        <name>[4Fe-4S] cluster</name>
        <dbReference type="ChEBI" id="CHEBI:49883"/>
        <note>ligand shared between dimeric partners</note>
    </ligand>
</feature>
<accession>Q7QGS3</accession>
<name>NUBP2_ANOGA</name>
<gene>
    <name evidence="1" type="primary">Nubp2</name>
    <name type="ORF">AGAP010873</name>
</gene>
<evidence type="ECO:0000250" key="1">
    <source>
        <dbReference type="UniProtKB" id="Q9VPD2"/>
    </source>
</evidence>
<evidence type="ECO:0000255" key="2">
    <source>
        <dbReference type="HAMAP-Rule" id="MF_03039"/>
    </source>
</evidence>
<organism>
    <name type="scientific">Anopheles gambiae</name>
    <name type="common">African malaria mosquito</name>
    <dbReference type="NCBI Taxonomy" id="7165"/>
    <lineage>
        <taxon>Eukaryota</taxon>
        <taxon>Metazoa</taxon>
        <taxon>Ecdysozoa</taxon>
        <taxon>Arthropoda</taxon>
        <taxon>Hexapoda</taxon>
        <taxon>Insecta</taxon>
        <taxon>Pterygota</taxon>
        <taxon>Neoptera</taxon>
        <taxon>Endopterygota</taxon>
        <taxon>Diptera</taxon>
        <taxon>Nematocera</taxon>
        <taxon>Culicoidea</taxon>
        <taxon>Culicidae</taxon>
        <taxon>Anophelinae</taxon>
        <taxon>Anopheles</taxon>
    </lineage>
</organism>
<comment type="function">
    <text evidence="2">Component of the cytosolic iron-sulfur (Fe/S) protein assembly (CIA) machinery. Required for maturation of extramitochondrial Fe-S proteins. The Nubp1-Nubp2 heterotetramer forms a Fe-S scaffold complex, mediating the de novo assembly of an Fe-S cluster and its transfer to target apoproteins.</text>
</comment>
<comment type="cofactor">
    <cofactor evidence="2">
        <name>[4Fe-4S] cluster</name>
        <dbReference type="ChEBI" id="CHEBI:49883"/>
    </cofactor>
    <text evidence="2">Binds 4 [4Fe-4S] clusters per heterotetramer. Contains two stable clusters in the N-termini of Nubp1 and two labile, bridging clusters between subunits of the Nubp1-Nubp2 heterotetramer.</text>
</comment>
<comment type="subunit">
    <text evidence="2">Heterotetramer of 2 Nubp1 and 2 Nubp2 chains.</text>
</comment>
<comment type="subcellular location">
    <subcellularLocation>
        <location evidence="2">Cytoplasm</location>
    </subcellularLocation>
</comment>
<comment type="similarity">
    <text evidence="2">Belongs to the Mrp/NBP35 ATP-binding proteins family. NUBP2/CFD1 subfamily.</text>
</comment>
<proteinExistence type="inferred from homology"/>
<sequence>MLDKVKHIILVLSGKGGVGKSTVSTQLALTLAEADHKVGLLDIDLCGPSVPYLLGLEDRDVHQCDEGWVPVYTSAEKRLAVMSIGFLLKNRSDAVIWRGPKKTAMIKQFLEDVNWDELDYLIIDTPPGTSDEHITVMECLKTVRTEGAIIVTTPQEMALEDVRKEVTFCKKTGIPILGIVENMSGFVCPNCSECTNIFSSGGGHSLAELAKVPHLGTLPIDPRVGELAGTGKACVKELPDCTTSEVLRELVRTLTTVGQ</sequence>
<reference key="1">
    <citation type="journal article" date="2002" name="Science">
        <title>The genome sequence of the malaria mosquito Anopheles gambiae.</title>
        <authorList>
            <person name="Holt R.A."/>
            <person name="Subramanian G.M."/>
            <person name="Halpern A."/>
            <person name="Sutton G.G."/>
            <person name="Charlab R."/>
            <person name="Nusskern D.R."/>
            <person name="Wincker P."/>
            <person name="Clark A.G."/>
            <person name="Ribeiro J.M.C."/>
            <person name="Wides R."/>
            <person name="Salzberg S.L."/>
            <person name="Loftus B.J."/>
            <person name="Yandell M.D."/>
            <person name="Majoros W.H."/>
            <person name="Rusch D.B."/>
            <person name="Lai Z."/>
            <person name="Kraft C.L."/>
            <person name="Abril J.F."/>
            <person name="Anthouard V."/>
            <person name="Arensburger P."/>
            <person name="Atkinson P.W."/>
            <person name="Baden H."/>
            <person name="de Berardinis V."/>
            <person name="Baldwin D."/>
            <person name="Benes V."/>
            <person name="Biedler J."/>
            <person name="Blass C."/>
            <person name="Bolanos R."/>
            <person name="Boscus D."/>
            <person name="Barnstead M."/>
            <person name="Cai S."/>
            <person name="Center A."/>
            <person name="Chaturverdi K."/>
            <person name="Christophides G.K."/>
            <person name="Chrystal M.A.M."/>
            <person name="Clamp M."/>
            <person name="Cravchik A."/>
            <person name="Curwen V."/>
            <person name="Dana A."/>
            <person name="Delcher A."/>
            <person name="Dew I."/>
            <person name="Evans C.A."/>
            <person name="Flanigan M."/>
            <person name="Grundschober-Freimoser A."/>
            <person name="Friedli L."/>
            <person name="Gu Z."/>
            <person name="Guan P."/>
            <person name="Guigo R."/>
            <person name="Hillenmeyer M.E."/>
            <person name="Hladun S.L."/>
            <person name="Hogan J.R."/>
            <person name="Hong Y.S."/>
            <person name="Hoover J."/>
            <person name="Jaillon O."/>
            <person name="Ke Z."/>
            <person name="Kodira C.D."/>
            <person name="Kokoza E."/>
            <person name="Koutsos A."/>
            <person name="Letunic I."/>
            <person name="Levitsky A.A."/>
            <person name="Liang Y."/>
            <person name="Lin J.-J."/>
            <person name="Lobo N.F."/>
            <person name="Lopez J.R."/>
            <person name="Malek J.A."/>
            <person name="McIntosh T.C."/>
            <person name="Meister S."/>
            <person name="Miller J.R."/>
            <person name="Mobarry C."/>
            <person name="Mongin E."/>
            <person name="Murphy S.D."/>
            <person name="O'Brochta D.A."/>
            <person name="Pfannkoch C."/>
            <person name="Qi R."/>
            <person name="Regier M.A."/>
            <person name="Remington K."/>
            <person name="Shao H."/>
            <person name="Sharakhova M.V."/>
            <person name="Sitter C.D."/>
            <person name="Shetty J."/>
            <person name="Smith T.J."/>
            <person name="Strong R."/>
            <person name="Sun J."/>
            <person name="Thomasova D."/>
            <person name="Ton L.Q."/>
            <person name="Topalis P."/>
            <person name="Tu Z.J."/>
            <person name="Unger M.F."/>
            <person name="Walenz B."/>
            <person name="Wang A.H."/>
            <person name="Wang J."/>
            <person name="Wang M."/>
            <person name="Wang X."/>
            <person name="Woodford K.J."/>
            <person name="Wortman J.R."/>
            <person name="Wu M."/>
            <person name="Yao A."/>
            <person name="Zdobnov E.M."/>
            <person name="Zhang H."/>
            <person name="Zhao Q."/>
            <person name="Zhao S."/>
            <person name="Zhu S.C."/>
            <person name="Zhimulev I."/>
            <person name="Coluzzi M."/>
            <person name="della Torre A."/>
            <person name="Roth C.W."/>
            <person name="Louis C."/>
            <person name="Kalush F."/>
            <person name="Mural R.J."/>
            <person name="Myers E.W."/>
            <person name="Adams M.D."/>
            <person name="Smith H.O."/>
            <person name="Broder S."/>
            <person name="Gardner M.J."/>
            <person name="Fraser C.M."/>
            <person name="Birney E."/>
            <person name="Bork P."/>
            <person name="Brey P.T."/>
            <person name="Venter J.C."/>
            <person name="Weissenbach J."/>
            <person name="Kafatos F.C."/>
            <person name="Collins F.H."/>
            <person name="Hoffman S.L."/>
        </authorList>
    </citation>
    <scope>NUCLEOTIDE SEQUENCE [LARGE SCALE GENOMIC DNA]</scope>
    <source>
        <strain>PEST</strain>
    </source>
</reference>